<evidence type="ECO:0000255" key="1">
    <source>
        <dbReference type="HAMAP-Rule" id="MF_01817"/>
    </source>
</evidence>
<evidence type="ECO:0000255" key="2">
    <source>
        <dbReference type="PROSITE-ProRule" id="PRU01246"/>
    </source>
</evidence>
<evidence type="ECO:0000255" key="3">
    <source>
        <dbReference type="PROSITE-ProRule" id="PRU01248"/>
    </source>
</evidence>
<accession>B9DTS3</accession>
<name>XERDL_STRU0</name>
<comment type="function">
    <text evidence="1">Putative tyrosine recombinase. Not involved in the cutting and rejoining of the recombining DNA molecules on dif(SL) site.</text>
</comment>
<comment type="subcellular location">
    <subcellularLocation>
        <location evidence="1">Cytoplasm</location>
    </subcellularLocation>
</comment>
<comment type="similarity">
    <text evidence="1">Belongs to the 'phage' integrase family. XerD-like subfamily.</text>
</comment>
<sequence>MIKHIEAFLASKTISENTLKSYRYDLNQFLMLIDHKLSDEKLVLYQKSLNHLSASAKKRKFSTVNQFLHYLYKVNVTDRFFELSGKVSLPSTKVPFTYQLDDKRFYQKTQHPSGQLIALLILELGLLPSELSKLRLSEIDLDFQLIRVDNGSTVKVLSFSQAILKHLSEMEVGSTYLFENKGKPYSRQWFFNQLNAFLLEIGYDQLSAQSLREQFIIREKEKGTSLMELTQKLGLKSPITLEKYYRL</sequence>
<gene>
    <name type="ordered locus">SUB0404</name>
</gene>
<organism>
    <name type="scientific">Streptococcus uberis (strain ATCC BAA-854 / 0140J)</name>
    <dbReference type="NCBI Taxonomy" id="218495"/>
    <lineage>
        <taxon>Bacteria</taxon>
        <taxon>Bacillati</taxon>
        <taxon>Bacillota</taxon>
        <taxon>Bacilli</taxon>
        <taxon>Lactobacillales</taxon>
        <taxon>Streptococcaceae</taxon>
        <taxon>Streptococcus</taxon>
    </lineage>
</organism>
<reference key="1">
    <citation type="journal article" date="2009" name="BMC Genomics">
        <title>Evidence for niche adaptation in the genome of the bovine pathogen Streptococcus uberis.</title>
        <authorList>
            <person name="Ward P.N."/>
            <person name="Holden M.T.G."/>
            <person name="Leigh J.A."/>
            <person name="Lennard N."/>
            <person name="Bignell A."/>
            <person name="Barron A."/>
            <person name="Clark L."/>
            <person name="Quail M.A."/>
            <person name="Woodward J."/>
            <person name="Barrell B.G."/>
            <person name="Egan S.A."/>
            <person name="Field T.R."/>
            <person name="Maskell D."/>
            <person name="Kehoe M."/>
            <person name="Dowson C.G."/>
            <person name="Chanter N."/>
            <person name="Whatmore A.M."/>
            <person name="Bentley S.D."/>
            <person name="Parkhill J."/>
        </authorList>
    </citation>
    <scope>NUCLEOTIDE SEQUENCE [LARGE SCALE GENOMIC DNA]</scope>
    <source>
        <strain>ATCC BAA-854 / 0140J</strain>
    </source>
</reference>
<feature type="chain" id="PRO_1000187925" description="Tyrosine recombinase XerD-like">
    <location>
        <begin position="1"/>
        <end position="247"/>
    </location>
</feature>
<feature type="domain" description="Core-binding (CB)" evidence="3">
    <location>
        <begin position="1"/>
        <end position="72"/>
    </location>
</feature>
<feature type="domain" description="Tyr recombinase" evidence="2">
    <location>
        <begin position="91"/>
        <end position="247"/>
    </location>
</feature>
<feature type="active site" evidence="2">
    <location>
        <position position="212"/>
    </location>
</feature>
<feature type="active site" description="O-(3'-phospho-DNA)-tyrosine intermediate" evidence="2">
    <location>
        <position position="244"/>
    </location>
</feature>
<proteinExistence type="inferred from homology"/>
<dbReference type="EMBL" id="AM946015">
    <property type="protein sequence ID" value="CAR41045.1"/>
    <property type="molecule type" value="Genomic_DNA"/>
</dbReference>
<dbReference type="SMR" id="B9DTS3"/>
<dbReference type="STRING" id="218495.SUB0404"/>
<dbReference type="KEGG" id="sub:SUB0404"/>
<dbReference type="eggNOG" id="COG0582">
    <property type="taxonomic scope" value="Bacteria"/>
</dbReference>
<dbReference type="HOGENOM" id="CLU_1128554_0_0_9"/>
<dbReference type="OrthoDB" id="2241487at2"/>
<dbReference type="Proteomes" id="UP000000449">
    <property type="component" value="Chromosome"/>
</dbReference>
<dbReference type="GO" id="GO:0005737">
    <property type="term" value="C:cytoplasm"/>
    <property type="evidence" value="ECO:0007669"/>
    <property type="project" value="UniProtKB-SubCell"/>
</dbReference>
<dbReference type="GO" id="GO:0003677">
    <property type="term" value="F:DNA binding"/>
    <property type="evidence" value="ECO:0007669"/>
    <property type="project" value="UniProtKB-KW"/>
</dbReference>
<dbReference type="GO" id="GO:0009037">
    <property type="term" value="F:tyrosine-based site-specific recombinase activity"/>
    <property type="evidence" value="ECO:0007669"/>
    <property type="project" value="UniProtKB-UniRule"/>
</dbReference>
<dbReference type="GO" id="GO:0006313">
    <property type="term" value="P:DNA transposition"/>
    <property type="evidence" value="ECO:0007669"/>
    <property type="project" value="UniProtKB-UniRule"/>
</dbReference>
<dbReference type="Gene3D" id="1.10.150.130">
    <property type="match status" value="1"/>
</dbReference>
<dbReference type="Gene3D" id="1.10.443.10">
    <property type="entry name" value="Intergrase catalytic core"/>
    <property type="match status" value="1"/>
</dbReference>
<dbReference type="HAMAP" id="MF_01817">
    <property type="entry name" value="Recomb_XerD_like"/>
    <property type="match status" value="1"/>
</dbReference>
<dbReference type="InterPro" id="IPR044068">
    <property type="entry name" value="CB"/>
</dbReference>
<dbReference type="InterPro" id="IPR011010">
    <property type="entry name" value="DNA_brk_join_enz"/>
</dbReference>
<dbReference type="InterPro" id="IPR013762">
    <property type="entry name" value="Integrase-like_cat_sf"/>
</dbReference>
<dbReference type="InterPro" id="IPR002104">
    <property type="entry name" value="Integrase_catalytic"/>
</dbReference>
<dbReference type="InterPro" id="IPR010998">
    <property type="entry name" value="Integrase_recombinase_N"/>
</dbReference>
<dbReference type="InterPro" id="IPR004107">
    <property type="entry name" value="Integrase_SAM-like_N"/>
</dbReference>
<dbReference type="InterPro" id="IPR020876">
    <property type="entry name" value="Tyrosine_recombinase_XerD-like"/>
</dbReference>
<dbReference type="NCBIfam" id="NF002685">
    <property type="entry name" value="PRK02436.1"/>
    <property type="match status" value="1"/>
</dbReference>
<dbReference type="Pfam" id="PF02899">
    <property type="entry name" value="Phage_int_SAM_1"/>
    <property type="match status" value="1"/>
</dbReference>
<dbReference type="Pfam" id="PF00589">
    <property type="entry name" value="Phage_integrase"/>
    <property type="match status" value="1"/>
</dbReference>
<dbReference type="SUPFAM" id="SSF56349">
    <property type="entry name" value="DNA breaking-rejoining enzymes"/>
    <property type="match status" value="1"/>
</dbReference>
<dbReference type="PROSITE" id="PS51900">
    <property type="entry name" value="CB"/>
    <property type="match status" value="1"/>
</dbReference>
<dbReference type="PROSITE" id="PS51898">
    <property type="entry name" value="TYR_RECOMBINASE"/>
    <property type="match status" value="1"/>
</dbReference>
<keyword id="KW-0963">Cytoplasm</keyword>
<keyword id="KW-0229">DNA integration</keyword>
<keyword id="KW-0233">DNA recombination</keyword>
<keyword id="KW-0238">DNA-binding</keyword>
<keyword id="KW-1185">Reference proteome</keyword>
<protein>
    <recommendedName>
        <fullName evidence="1">Tyrosine recombinase XerD-like</fullName>
    </recommendedName>
</protein>